<keyword id="KW-0010">Activator</keyword>
<keyword id="KW-0131">Cell cycle</keyword>
<keyword id="KW-0132">Cell division</keyword>
<keyword id="KW-0479">Metal-binding</keyword>
<keyword id="KW-0498">Mitosis</keyword>
<keyword id="KW-0597">Phosphoprotein</keyword>
<keyword id="KW-1185">Reference proteome</keyword>
<keyword id="KW-0804">Transcription</keyword>
<keyword id="KW-0805">Transcription regulation</keyword>
<keyword id="KW-0862">Zinc</keyword>
<keyword id="KW-0863">Zinc-finger</keyword>
<organism>
    <name type="scientific">Schizosaccharomyces pombe (strain 972 / ATCC 24843)</name>
    <name type="common">Fission yeast</name>
    <dbReference type="NCBI Taxonomy" id="284812"/>
    <lineage>
        <taxon>Eukaryota</taxon>
        <taxon>Fungi</taxon>
        <taxon>Dikarya</taxon>
        <taxon>Ascomycota</taxon>
        <taxon>Taphrinomycotina</taxon>
        <taxon>Schizosaccharomycetes</taxon>
        <taxon>Schizosaccharomycetales</taxon>
        <taxon>Schizosaccharomycetaceae</taxon>
        <taxon>Schizosaccharomyces</taxon>
    </lineage>
</organism>
<dbReference type="EMBL" id="X91044">
    <property type="protein sequence ID" value="CAA62504.1"/>
    <property type="molecule type" value="Genomic_DNA"/>
</dbReference>
<dbReference type="EMBL" id="CU329671">
    <property type="protein sequence ID" value="CAB10158.1"/>
    <property type="molecule type" value="Genomic_DNA"/>
</dbReference>
<dbReference type="PIR" id="S59134">
    <property type="entry name" value="S59134"/>
</dbReference>
<dbReference type="RefSeq" id="NP_595705.1">
    <property type="nucleotide sequence ID" value="NM_001021602.2"/>
</dbReference>
<dbReference type="BioGRID" id="276870">
    <property type="interactions" value="12"/>
</dbReference>
<dbReference type="STRING" id="284812.Q09824"/>
<dbReference type="iPTMnet" id="Q09824"/>
<dbReference type="PaxDb" id="4896-SPBC2F12.11c.1"/>
<dbReference type="EnsemblFungi" id="SPBC2F12.11c.1">
    <property type="protein sequence ID" value="SPBC2F12.11c.1:pep"/>
    <property type="gene ID" value="SPBC2F12.11c"/>
</dbReference>
<dbReference type="GeneID" id="2540341"/>
<dbReference type="KEGG" id="spo:2540341"/>
<dbReference type="PomBase" id="SPBC2F12.11c">
    <property type="gene designation" value="rep2"/>
</dbReference>
<dbReference type="VEuPathDB" id="FungiDB:SPBC2F12.11c"/>
<dbReference type="HOGENOM" id="CLU_1251309_0_0_1"/>
<dbReference type="InParanoid" id="Q09824"/>
<dbReference type="PRO" id="PR:Q09824"/>
<dbReference type="Proteomes" id="UP000002485">
    <property type="component" value="Chromosome II"/>
</dbReference>
<dbReference type="GO" id="GO:0030907">
    <property type="term" value="C:MBF transcription complex"/>
    <property type="evidence" value="ECO:0000269"/>
    <property type="project" value="PomBase"/>
</dbReference>
<dbReference type="GO" id="GO:0005634">
    <property type="term" value="C:nucleus"/>
    <property type="evidence" value="ECO:0007005"/>
    <property type="project" value="PomBase"/>
</dbReference>
<dbReference type="GO" id="GO:0062070">
    <property type="term" value="F:SAGA complex binding"/>
    <property type="evidence" value="ECO:0000314"/>
    <property type="project" value="PomBase"/>
</dbReference>
<dbReference type="GO" id="GO:0003713">
    <property type="term" value="F:transcription coactivator activity"/>
    <property type="evidence" value="ECO:0000314"/>
    <property type="project" value="PomBase"/>
</dbReference>
<dbReference type="GO" id="GO:0008270">
    <property type="term" value="F:zinc ion binding"/>
    <property type="evidence" value="ECO:0007669"/>
    <property type="project" value="UniProtKB-KW"/>
</dbReference>
<dbReference type="GO" id="GO:0051301">
    <property type="term" value="P:cell division"/>
    <property type="evidence" value="ECO:0007669"/>
    <property type="project" value="UniProtKB-KW"/>
</dbReference>
<dbReference type="GO" id="GO:0000122">
    <property type="term" value="P:negative regulation of transcription by RNA polymerase II"/>
    <property type="evidence" value="ECO:0000315"/>
    <property type="project" value="PomBase"/>
</dbReference>
<dbReference type="GO" id="GO:0006366">
    <property type="term" value="P:transcription by RNA polymerase II"/>
    <property type="evidence" value="ECO:0000315"/>
    <property type="project" value="PomBase"/>
</dbReference>
<sequence length="219" mass="24668">MHFADIPLSKPCLNNPPTYPWSSPILSSIANPSLCDIVSSPSSVSSFASSDDFAFMNAYCLPIQQNHQFGSPVAASPNQQPLVESQNRRNVTYASLVIGKLGIAQLIRQQTDPPQIIHRKQDKGLMARVLSRSKKQEERENHSSDARDAIKSALRRRMRRREGRVQKALRPTPNLICSKCNTTFNHSTALMMHEATCLNQVPFKLSDFFVEDVIDDWLF</sequence>
<gene>
    <name type="primary">rep2</name>
    <name type="ORF">SPBC2F12.11c</name>
</gene>
<feature type="chain" id="PRO_0000097249" description="Transcriptional activator protein rep2">
    <location>
        <begin position="1"/>
        <end position="219"/>
    </location>
</feature>
<feature type="zinc finger region" evidence="1">
    <location>
        <begin position="177"/>
        <end position="197"/>
    </location>
</feature>
<comment type="function">
    <text>Transcriptional activator which interacts with the mcb binding subunit complex formed by res2 and cdc10. Rep2 is required for the mitotic cell cycle start.</text>
</comment>
<proteinExistence type="predicted"/>
<evidence type="ECO:0000255" key="1"/>
<protein>
    <recommendedName>
        <fullName>Transcriptional activator protein rep2</fullName>
    </recommendedName>
</protein>
<accession>Q09824</accession>
<reference key="1">
    <citation type="journal article" date="1995" name="EMBO J.">
        <title>Fission yeast Rep2 is a putative transcriptional activator subunit for the cell cycle 'start' function of Res2-Cdc10.</title>
        <authorList>
            <person name="Nakashima N."/>
            <person name="Tanaka K."/>
            <person name="Sturm S."/>
            <person name="Okayama H."/>
        </authorList>
    </citation>
    <scope>NUCLEOTIDE SEQUENCE [GENOMIC DNA]</scope>
</reference>
<reference key="2">
    <citation type="journal article" date="2002" name="Nature">
        <title>The genome sequence of Schizosaccharomyces pombe.</title>
        <authorList>
            <person name="Wood V."/>
            <person name="Gwilliam R."/>
            <person name="Rajandream M.A."/>
            <person name="Lyne M.H."/>
            <person name="Lyne R."/>
            <person name="Stewart A."/>
            <person name="Sgouros J.G."/>
            <person name="Peat N."/>
            <person name="Hayles J."/>
            <person name="Baker S.G."/>
            <person name="Basham D."/>
            <person name="Bowman S."/>
            <person name="Brooks K."/>
            <person name="Brown D."/>
            <person name="Brown S."/>
            <person name="Chillingworth T."/>
            <person name="Churcher C.M."/>
            <person name="Collins M."/>
            <person name="Connor R."/>
            <person name="Cronin A."/>
            <person name="Davis P."/>
            <person name="Feltwell T."/>
            <person name="Fraser A."/>
            <person name="Gentles S."/>
            <person name="Goble A."/>
            <person name="Hamlin N."/>
            <person name="Harris D.E."/>
            <person name="Hidalgo J."/>
            <person name="Hodgson G."/>
            <person name="Holroyd S."/>
            <person name="Hornsby T."/>
            <person name="Howarth S."/>
            <person name="Huckle E.J."/>
            <person name="Hunt S."/>
            <person name="Jagels K."/>
            <person name="James K.D."/>
            <person name="Jones L."/>
            <person name="Jones M."/>
            <person name="Leather S."/>
            <person name="McDonald S."/>
            <person name="McLean J."/>
            <person name="Mooney P."/>
            <person name="Moule S."/>
            <person name="Mungall K.L."/>
            <person name="Murphy L.D."/>
            <person name="Niblett D."/>
            <person name="Odell C."/>
            <person name="Oliver K."/>
            <person name="O'Neil S."/>
            <person name="Pearson D."/>
            <person name="Quail M.A."/>
            <person name="Rabbinowitsch E."/>
            <person name="Rutherford K.M."/>
            <person name="Rutter S."/>
            <person name="Saunders D."/>
            <person name="Seeger K."/>
            <person name="Sharp S."/>
            <person name="Skelton J."/>
            <person name="Simmonds M.N."/>
            <person name="Squares R."/>
            <person name="Squares S."/>
            <person name="Stevens K."/>
            <person name="Taylor K."/>
            <person name="Taylor R.G."/>
            <person name="Tivey A."/>
            <person name="Walsh S.V."/>
            <person name="Warren T."/>
            <person name="Whitehead S."/>
            <person name="Woodward J.R."/>
            <person name="Volckaert G."/>
            <person name="Aert R."/>
            <person name="Robben J."/>
            <person name="Grymonprez B."/>
            <person name="Weltjens I."/>
            <person name="Vanstreels E."/>
            <person name="Rieger M."/>
            <person name="Schaefer M."/>
            <person name="Mueller-Auer S."/>
            <person name="Gabel C."/>
            <person name="Fuchs M."/>
            <person name="Duesterhoeft A."/>
            <person name="Fritzc C."/>
            <person name="Holzer E."/>
            <person name="Moestl D."/>
            <person name="Hilbert H."/>
            <person name="Borzym K."/>
            <person name="Langer I."/>
            <person name="Beck A."/>
            <person name="Lehrach H."/>
            <person name="Reinhardt R."/>
            <person name="Pohl T.M."/>
            <person name="Eger P."/>
            <person name="Zimmermann W."/>
            <person name="Wedler H."/>
            <person name="Wambutt R."/>
            <person name="Purnelle B."/>
            <person name="Goffeau A."/>
            <person name="Cadieu E."/>
            <person name="Dreano S."/>
            <person name="Gloux S."/>
            <person name="Lelaure V."/>
            <person name="Mottier S."/>
            <person name="Galibert F."/>
            <person name="Aves S.J."/>
            <person name="Xiang Z."/>
            <person name="Hunt C."/>
            <person name="Moore K."/>
            <person name="Hurst S.M."/>
            <person name="Lucas M."/>
            <person name="Rochet M."/>
            <person name="Gaillardin C."/>
            <person name="Tallada V.A."/>
            <person name="Garzon A."/>
            <person name="Thode G."/>
            <person name="Daga R.R."/>
            <person name="Cruzado L."/>
            <person name="Jimenez J."/>
            <person name="Sanchez M."/>
            <person name="del Rey F."/>
            <person name="Benito J."/>
            <person name="Dominguez A."/>
            <person name="Revuelta J.L."/>
            <person name="Moreno S."/>
            <person name="Armstrong J."/>
            <person name="Forsburg S.L."/>
            <person name="Cerutti L."/>
            <person name="Lowe T."/>
            <person name="McCombie W.R."/>
            <person name="Paulsen I."/>
            <person name="Potashkin J."/>
            <person name="Shpakovski G.V."/>
            <person name="Ussery D."/>
            <person name="Barrell B.G."/>
            <person name="Nurse P."/>
        </authorList>
    </citation>
    <scope>NUCLEOTIDE SEQUENCE [LARGE SCALE GENOMIC DNA]</scope>
    <source>
        <strain>972 / ATCC 24843</strain>
    </source>
</reference>
<name>REP2_SCHPO</name>